<protein>
    <recommendedName>
        <fullName>Long chronological lifespan protein 2</fullName>
    </recommendedName>
</protein>
<keyword id="KW-0732">Signal</keyword>
<sequence length="134" mass="15087">MFQKLIVITFAIALASANIFDFLNNFNAGGRQQQNQGVRTPQEYESVVLNSQCDKYLCPDTGLCVEAPKFCPCPYPSSQIRCFLPDGRFVCISKPAGEGISEKYNDPKTNWKIDAKDDNIRDCGWVNRAWRGLV</sequence>
<dbReference type="EMBL" id="FM992695">
    <property type="protein sequence ID" value="CAX40115.1"/>
    <property type="molecule type" value="Genomic_DNA"/>
</dbReference>
<dbReference type="RefSeq" id="XP_002422113.1">
    <property type="nucleotide sequence ID" value="XM_002422068.1"/>
</dbReference>
<dbReference type="SMR" id="B9WM02"/>
<dbReference type="GeneID" id="8049742"/>
<dbReference type="KEGG" id="cdu:CD36_31210"/>
<dbReference type="CGD" id="CAL0000164872">
    <property type="gene designation" value="Cd36_31210"/>
</dbReference>
<dbReference type="VEuPathDB" id="FungiDB:CD36_31210"/>
<dbReference type="eggNOG" id="ENOG502S416">
    <property type="taxonomic scope" value="Eukaryota"/>
</dbReference>
<dbReference type="HOGENOM" id="CLU_142363_1_0_1"/>
<dbReference type="OrthoDB" id="2234316at2759"/>
<dbReference type="Proteomes" id="UP000002605">
    <property type="component" value="Chromosome R"/>
</dbReference>
<dbReference type="GO" id="GO:0036503">
    <property type="term" value="P:ERAD pathway"/>
    <property type="evidence" value="ECO:0007669"/>
    <property type="project" value="TreeGrafter"/>
</dbReference>
<dbReference type="CDD" id="cd23996">
    <property type="entry name" value="LCL2-like"/>
    <property type="match status" value="1"/>
</dbReference>
<dbReference type="InterPro" id="IPR034543">
    <property type="entry name" value="LCL2"/>
</dbReference>
<dbReference type="PANTHER" id="PTHR38425">
    <property type="entry name" value="LONG CHRONOLOGICAL LIFESPAN PROTEIN 2"/>
    <property type="match status" value="1"/>
</dbReference>
<dbReference type="PANTHER" id="PTHR38425:SF1">
    <property type="entry name" value="LONG CHRONOLOGICAL LIFESPAN PROTEIN 2"/>
    <property type="match status" value="1"/>
</dbReference>
<proteinExistence type="inferred from homology"/>
<gene>
    <name type="primary">LCL2</name>
    <name type="ORF">CD36_31210</name>
</gene>
<organism>
    <name type="scientific">Candida dubliniensis (strain CD36 / ATCC MYA-646 / CBS 7987 / NCPF 3949 / NRRL Y-17841)</name>
    <name type="common">Yeast</name>
    <dbReference type="NCBI Taxonomy" id="573826"/>
    <lineage>
        <taxon>Eukaryota</taxon>
        <taxon>Fungi</taxon>
        <taxon>Dikarya</taxon>
        <taxon>Ascomycota</taxon>
        <taxon>Saccharomycotina</taxon>
        <taxon>Pichiomycetes</taxon>
        <taxon>Debaryomycetaceae</taxon>
        <taxon>Candida/Lodderomyces clade</taxon>
        <taxon>Candida</taxon>
    </lineage>
</organism>
<feature type="signal peptide" evidence="2">
    <location>
        <begin position="1"/>
        <end position="17"/>
    </location>
</feature>
<feature type="chain" id="PRO_0000408600" description="Long chronological lifespan protein 2">
    <location>
        <begin position="18"/>
        <end position="134"/>
    </location>
</feature>
<evidence type="ECO:0000250" key="1"/>
<evidence type="ECO:0000255" key="2"/>
<evidence type="ECO:0000305" key="3"/>
<accession>B9WM02</accession>
<reference key="1">
    <citation type="journal article" date="2009" name="Genome Res.">
        <title>Comparative genomics of the fungal pathogens Candida dubliniensis and Candida albicans.</title>
        <authorList>
            <person name="Jackson A.P."/>
            <person name="Gamble J.A."/>
            <person name="Yeomans T."/>
            <person name="Moran G.P."/>
            <person name="Saunders D."/>
            <person name="Harris D."/>
            <person name="Aslett M."/>
            <person name="Barrell J.F."/>
            <person name="Butler G."/>
            <person name="Citiulo F."/>
            <person name="Coleman D.C."/>
            <person name="de Groot P.W.J."/>
            <person name="Goodwin T.J."/>
            <person name="Quail M.A."/>
            <person name="McQuillan J."/>
            <person name="Munro C.A."/>
            <person name="Pain A."/>
            <person name="Poulter R.T."/>
            <person name="Rajandream M.A."/>
            <person name="Renauld H."/>
            <person name="Spiering M.J."/>
            <person name="Tivey A."/>
            <person name="Gow N.A.R."/>
            <person name="Barrell B."/>
            <person name="Sullivan D.J."/>
            <person name="Berriman M."/>
        </authorList>
    </citation>
    <scope>NUCLEOTIDE SEQUENCE [LARGE SCALE GENOMIC DNA]</scope>
    <source>
        <strain>CD36 / ATCC MYA-646 / CBS 7987 / NCPF 3949 / NRRL Y-17841</strain>
    </source>
</reference>
<name>LCL2_CANDC</name>
<comment type="function">
    <text evidence="1">Probable component of the endoplasmic reticulum-associated degradation (ERAD) pathway.</text>
</comment>
<comment type="similarity">
    <text evidence="3">Belongs to the LCL2 family.</text>
</comment>